<sequence>MDRSPLFLIIMGAPGSGKGTQSKLLASQLSLLHISSGDLLRGAVSKDTPLSQEIKSYLDQGKLLPDTLVWKLVHEKLDEFQQDTLLRRLSFLSRSENSAILDGFPRTVTQAKLLHEFLSSYFPNYKVILLDISDEEVLNRLTSRYICPACQGIYNEQQGFSSCPKCSVELIRRSDDTLEVILDRIQTYKQETQPVLDYYTEKQKLITIDANAPTQQVFQSILDSLSASLVYQERDCCNCDCDDED</sequence>
<dbReference type="EC" id="2.7.4.3" evidence="1"/>
<dbReference type="EMBL" id="AM884177">
    <property type="protein sequence ID" value="CAP06777.1"/>
    <property type="molecule type" value="Genomic_DNA"/>
</dbReference>
<dbReference type="RefSeq" id="WP_009873579.1">
    <property type="nucleotide sequence ID" value="NC_010280.2"/>
</dbReference>
<dbReference type="SMR" id="B0BBB5"/>
<dbReference type="KEGG" id="ctl:CTLon_0379"/>
<dbReference type="HOGENOM" id="CLU_032354_1_2_0"/>
<dbReference type="UniPathway" id="UPA00588">
    <property type="reaction ID" value="UER00649"/>
</dbReference>
<dbReference type="Proteomes" id="UP001154401">
    <property type="component" value="Chromosome"/>
</dbReference>
<dbReference type="GO" id="GO:0005737">
    <property type="term" value="C:cytoplasm"/>
    <property type="evidence" value="ECO:0007669"/>
    <property type="project" value="UniProtKB-SubCell"/>
</dbReference>
<dbReference type="GO" id="GO:0004017">
    <property type="term" value="F:adenylate kinase activity"/>
    <property type="evidence" value="ECO:0007669"/>
    <property type="project" value="UniProtKB-UniRule"/>
</dbReference>
<dbReference type="GO" id="GO:0005524">
    <property type="term" value="F:ATP binding"/>
    <property type="evidence" value="ECO:0007669"/>
    <property type="project" value="UniProtKB-UniRule"/>
</dbReference>
<dbReference type="GO" id="GO:0046872">
    <property type="term" value="F:metal ion binding"/>
    <property type="evidence" value="ECO:0007669"/>
    <property type="project" value="UniProtKB-KW"/>
</dbReference>
<dbReference type="GO" id="GO:0044209">
    <property type="term" value="P:AMP salvage"/>
    <property type="evidence" value="ECO:0007669"/>
    <property type="project" value="UniProtKB-UniRule"/>
</dbReference>
<dbReference type="CDD" id="cd01428">
    <property type="entry name" value="ADK"/>
    <property type="match status" value="1"/>
</dbReference>
<dbReference type="Gene3D" id="3.40.50.300">
    <property type="entry name" value="P-loop containing nucleotide triphosphate hydrolases"/>
    <property type="match status" value="1"/>
</dbReference>
<dbReference type="HAMAP" id="MF_00235">
    <property type="entry name" value="Adenylate_kinase_Adk"/>
    <property type="match status" value="1"/>
</dbReference>
<dbReference type="InterPro" id="IPR006259">
    <property type="entry name" value="Adenyl_kin_sub"/>
</dbReference>
<dbReference type="InterPro" id="IPR000850">
    <property type="entry name" value="Adenylat/UMP-CMP_kin"/>
</dbReference>
<dbReference type="InterPro" id="IPR033690">
    <property type="entry name" value="Adenylat_kinase_CS"/>
</dbReference>
<dbReference type="InterPro" id="IPR027417">
    <property type="entry name" value="P-loop_NTPase"/>
</dbReference>
<dbReference type="NCBIfam" id="TIGR01351">
    <property type="entry name" value="adk"/>
    <property type="match status" value="1"/>
</dbReference>
<dbReference type="NCBIfam" id="NF001385">
    <property type="entry name" value="PRK00279.2-3"/>
    <property type="match status" value="1"/>
</dbReference>
<dbReference type="PANTHER" id="PTHR23359">
    <property type="entry name" value="NUCLEOTIDE KINASE"/>
    <property type="match status" value="1"/>
</dbReference>
<dbReference type="Pfam" id="PF00406">
    <property type="entry name" value="ADK"/>
    <property type="match status" value="1"/>
</dbReference>
<dbReference type="PRINTS" id="PR00094">
    <property type="entry name" value="ADENYLTKNASE"/>
</dbReference>
<dbReference type="SUPFAM" id="SSF52540">
    <property type="entry name" value="P-loop containing nucleoside triphosphate hydrolases"/>
    <property type="match status" value="1"/>
</dbReference>
<dbReference type="SUPFAM" id="SSF57802">
    <property type="entry name" value="Rubredoxin-like"/>
    <property type="match status" value="1"/>
</dbReference>
<dbReference type="PROSITE" id="PS00113">
    <property type="entry name" value="ADENYLATE_KINASE"/>
    <property type="match status" value="1"/>
</dbReference>
<gene>
    <name evidence="1" type="primary">adk</name>
    <name type="ordered locus">CTLon_0379</name>
</gene>
<proteinExistence type="inferred from homology"/>
<comment type="function">
    <text evidence="1">Catalyzes the reversible transfer of the terminal phosphate group between ATP and AMP. Plays an important role in cellular energy homeostasis and in adenine nucleotide metabolism.</text>
</comment>
<comment type="catalytic activity">
    <reaction evidence="1">
        <text>AMP + ATP = 2 ADP</text>
        <dbReference type="Rhea" id="RHEA:12973"/>
        <dbReference type="ChEBI" id="CHEBI:30616"/>
        <dbReference type="ChEBI" id="CHEBI:456215"/>
        <dbReference type="ChEBI" id="CHEBI:456216"/>
        <dbReference type="EC" id="2.7.4.3"/>
    </reaction>
</comment>
<comment type="pathway">
    <text evidence="1">Purine metabolism; AMP biosynthesis via salvage pathway; AMP from ADP: step 1/1.</text>
</comment>
<comment type="subunit">
    <text evidence="1">Monomer.</text>
</comment>
<comment type="subcellular location">
    <subcellularLocation>
        <location evidence="1">Cytoplasm</location>
    </subcellularLocation>
</comment>
<comment type="domain">
    <text evidence="1">Consists of three domains, a large central CORE domain and two small peripheral domains, NMPbind and LID, which undergo movements during catalysis. The LID domain closes over the site of phosphoryl transfer upon ATP binding. Assembling and dissambling the active center during each catalytic cycle provides an effective means to prevent ATP hydrolysis. Some bacteria have evolved a zinc-coordinating structure that stabilizes the LID domain.</text>
</comment>
<comment type="similarity">
    <text evidence="1">Belongs to the adenylate kinase family.</text>
</comment>
<organism>
    <name type="scientific">Chlamydia trachomatis serovar L2b (strain UCH-1/proctitis)</name>
    <dbReference type="NCBI Taxonomy" id="471473"/>
    <lineage>
        <taxon>Bacteria</taxon>
        <taxon>Pseudomonadati</taxon>
        <taxon>Chlamydiota</taxon>
        <taxon>Chlamydiia</taxon>
        <taxon>Chlamydiales</taxon>
        <taxon>Chlamydiaceae</taxon>
        <taxon>Chlamydia/Chlamydophila group</taxon>
        <taxon>Chlamydia</taxon>
    </lineage>
</organism>
<reference key="1">
    <citation type="journal article" date="2008" name="Genome Res.">
        <title>Chlamydia trachomatis: genome sequence analysis of lymphogranuloma venereum isolates.</title>
        <authorList>
            <person name="Thomson N.R."/>
            <person name="Holden M.T.G."/>
            <person name="Carder C."/>
            <person name="Lennard N."/>
            <person name="Lockey S.J."/>
            <person name="Marsh P."/>
            <person name="Skipp P."/>
            <person name="O'Connor C.D."/>
            <person name="Goodhead I."/>
            <person name="Norbertzcak H."/>
            <person name="Harris B."/>
            <person name="Ormond D."/>
            <person name="Rance R."/>
            <person name="Quail M.A."/>
            <person name="Parkhill J."/>
            <person name="Stephens R.S."/>
            <person name="Clarke I.N."/>
        </authorList>
    </citation>
    <scope>NUCLEOTIDE SEQUENCE [LARGE SCALE GENOMIC DNA]</scope>
    <source>
        <strain>UCH-1/proctitis</strain>
    </source>
</reference>
<name>KAD_CHLTB</name>
<feature type="chain" id="PRO_1000100547" description="Adenylate kinase">
    <location>
        <begin position="1"/>
        <end position="245"/>
    </location>
</feature>
<feature type="region of interest" description="NMP" evidence="1">
    <location>
        <begin position="35"/>
        <end position="64"/>
    </location>
</feature>
<feature type="region of interest" description="LID" evidence="1">
    <location>
        <begin position="143"/>
        <end position="176"/>
    </location>
</feature>
<feature type="binding site" evidence="1">
    <location>
        <begin position="15"/>
        <end position="20"/>
    </location>
    <ligand>
        <name>ATP</name>
        <dbReference type="ChEBI" id="CHEBI:30616"/>
    </ligand>
</feature>
<feature type="binding site" evidence="1">
    <location>
        <position position="36"/>
    </location>
    <ligand>
        <name>AMP</name>
        <dbReference type="ChEBI" id="CHEBI:456215"/>
    </ligand>
</feature>
<feature type="binding site" evidence="1">
    <location>
        <position position="41"/>
    </location>
    <ligand>
        <name>AMP</name>
        <dbReference type="ChEBI" id="CHEBI:456215"/>
    </ligand>
</feature>
<feature type="binding site" evidence="1">
    <location>
        <begin position="62"/>
        <end position="64"/>
    </location>
    <ligand>
        <name>AMP</name>
        <dbReference type="ChEBI" id="CHEBI:456215"/>
    </ligand>
</feature>
<feature type="binding site" evidence="1">
    <location>
        <begin position="103"/>
        <end position="106"/>
    </location>
    <ligand>
        <name>AMP</name>
        <dbReference type="ChEBI" id="CHEBI:456215"/>
    </ligand>
</feature>
<feature type="binding site" evidence="1">
    <location>
        <position position="110"/>
    </location>
    <ligand>
        <name>AMP</name>
        <dbReference type="ChEBI" id="CHEBI:456215"/>
    </ligand>
</feature>
<feature type="binding site" evidence="1">
    <location>
        <position position="144"/>
    </location>
    <ligand>
        <name>ATP</name>
        <dbReference type="ChEBI" id="CHEBI:30616"/>
    </ligand>
</feature>
<feature type="binding site" evidence="1">
    <location>
        <position position="147"/>
    </location>
    <ligand>
        <name>Zn(2+)</name>
        <dbReference type="ChEBI" id="CHEBI:29105"/>
        <note>structural</note>
    </ligand>
</feature>
<feature type="binding site" evidence="1">
    <location>
        <position position="150"/>
    </location>
    <ligand>
        <name>Zn(2+)</name>
        <dbReference type="ChEBI" id="CHEBI:29105"/>
        <note>structural</note>
    </ligand>
</feature>
<feature type="binding site" evidence="1">
    <location>
        <begin position="153"/>
        <end position="154"/>
    </location>
    <ligand>
        <name>ATP</name>
        <dbReference type="ChEBI" id="CHEBI:30616"/>
    </ligand>
</feature>
<feature type="binding site" evidence="1">
    <location>
        <position position="163"/>
    </location>
    <ligand>
        <name>Zn(2+)</name>
        <dbReference type="ChEBI" id="CHEBI:29105"/>
        <note>structural</note>
    </ligand>
</feature>
<feature type="binding site" evidence="1">
    <location>
        <position position="166"/>
    </location>
    <ligand>
        <name>Zn(2+)</name>
        <dbReference type="ChEBI" id="CHEBI:29105"/>
        <note>structural</note>
    </ligand>
</feature>
<feature type="binding site" evidence="1">
    <location>
        <position position="173"/>
    </location>
    <ligand>
        <name>AMP</name>
        <dbReference type="ChEBI" id="CHEBI:456215"/>
    </ligand>
</feature>
<feature type="binding site" evidence="1">
    <location>
        <position position="184"/>
    </location>
    <ligand>
        <name>AMP</name>
        <dbReference type="ChEBI" id="CHEBI:456215"/>
    </ligand>
</feature>
<feature type="binding site" evidence="1">
    <location>
        <position position="212"/>
    </location>
    <ligand>
        <name>ATP</name>
        <dbReference type="ChEBI" id="CHEBI:30616"/>
    </ligand>
</feature>
<keyword id="KW-0067">ATP-binding</keyword>
<keyword id="KW-0963">Cytoplasm</keyword>
<keyword id="KW-0418">Kinase</keyword>
<keyword id="KW-0479">Metal-binding</keyword>
<keyword id="KW-0545">Nucleotide biosynthesis</keyword>
<keyword id="KW-0547">Nucleotide-binding</keyword>
<keyword id="KW-0808">Transferase</keyword>
<keyword id="KW-0862">Zinc</keyword>
<accession>B0BBB5</accession>
<evidence type="ECO:0000255" key="1">
    <source>
        <dbReference type="HAMAP-Rule" id="MF_00235"/>
    </source>
</evidence>
<protein>
    <recommendedName>
        <fullName evidence="1">Adenylate kinase</fullName>
        <shortName evidence="1">AK</shortName>
        <ecNumber evidence="1">2.7.4.3</ecNumber>
    </recommendedName>
    <alternativeName>
        <fullName evidence="1">ATP-AMP transphosphorylase</fullName>
    </alternativeName>
    <alternativeName>
        <fullName evidence="1">ATP:AMP phosphotransferase</fullName>
    </alternativeName>
    <alternativeName>
        <fullName evidence="1">Adenylate monophosphate kinase</fullName>
    </alternativeName>
</protein>